<comment type="function">
    <text evidence="2">Sodium- and chloride-dependent glycine transporter. Terminates the action of glycine by its high affinity sodium-dependent reuptake into presynaptic terminals. May be responsible for the termination of neurotransmission at strychnine-sensitive glycinergic synapses (By similarity).</text>
</comment>
<comment type="catalytic activity">
    <reaction evidence="2">
        <text>glycine(out) + chloride(out) + 3 Na(+)(out) = glycine(in) + chloride(in) + 3 Na(+)(in)</text>
        <dbReference type="Rhea" id="RHEA:70695"/>
        <dbReference type="ChEBI" id="CHEBI:17996"/>
        <dbReference type="ChEBI" id="CHEBI:29101"/>
        <dbReference type="ChEBI" id="CHEBI:57305"/>
    </reaction>
</comment>
<comment type="subcellular location">
    <subcellularLocation>
        <location evidence="2">Cell membrane</location>
        <topology evidence="3">Multi-pass membrane protein</topology>
    </subcellularLocation>
</comment>
<comment type="tissue specificity">
    <text evidence="5">First expressed in late neurula stages in the anterior spinal cord, where expression intensifies through the tailbud stages, and by hatching, expression is seen in the hindbrain. During late hatching stages, expression extends along most of the length of the spinal cord, mildly intensifies in the hindbrain, and appears in localized regions of the lateral forebrain and medial midbrain. By the swimming tadpole stage, weak expression appears in the anterior hindbrain, with stronger expression in the posterior, postmitotic neurons.</text>
</comment>
<comment type="similarity">
    <text evidence="6">Belongs to the sodium:neurotransmitter symporter (SNF) (TC 2.A.22) family. SLC6A5 subfamily.</text>
</comment>
<gene>
    <name evidence="2" type="primary">slc6a5</name>
    <name evidence="7" type="synonym">glyt2</name>
</gene>
<keyword id="KW-1003">Cell membrane</keyword>
<keyword id="KW-1015">Disulfide bond</keyword>
<keyword id="KW-0325">Glycoprotein</keyword>
<keyword id="KW-0472">Membrane</keyword>
<keyword id="KW-0479">Metal-binding</keyword>
<keyword id="KW-0532">Neurotransmitter transport</keyword>
<keyword id="KW-1185">Reference proteome</keyword>
<keyword id="KW-0915">Sodium</keyword>
<keyword id="KW-0769">Symport</keyword>
<keyword id="KW-0812">Transmembrane</keyword>
<keyword id="KW-1133">Transmembrane helix</keyword>
<keyword id="KW-0813">Transport</keyword>
<reference evidence="6 7" key="1">
    <citation type="journal article" date="2008" name="Gene Expr. Patterns">
        <title>Expression patterns of glycine transporters (xGlyT1, xGlyT2, and xVIAAT) in Xenopus laevis during early development.</title>
        <authorList>
            <person name="Wester M.R."/>
            <person name="Teasley D.C."/>
            <person name="Byers S.L."/>
            <person name="Saha M.S."/>
        </authorList>
    </citation>
    <scope>NUCLEOTIDE SEQUENCE [MRNA]</scope>
    <scope>TISSUE SPECIFICITY</scope>
    <source>
        <tissue evidence="5">Tadpole</tissue>
    </source>
</reference>
<feature type="chain" id="PRO_0000341533" description="Sodium- and chloride-dependent glycine transporter 2">
    <location>
        <begin position="1"/>
        <end position="790"/>
    </location>
</feature>
<feature type="topological domain" description="Cytoplasmic" evidence="3">
    <location>
        <begin position="1"/>
        <end position="192"/>
    </location>
</feature>
<feature type="transmembrane region" description="Helical; Name=1" evidence="3">
    <location>
        <begin position="193"/>
        <end position="213"/>
    </location>
</feature>
<feature type="transmembrane region" description="Helical; Name=2" evidence="3">
    <location>
        <begin position="220"/>
        <end position="240"/>
    </location>
</feature>
<feature type="transmembrane region" description="Helical; Name=3" evidence="3">
    <location>
        <begin position="264"/>
        <end position="284"/>
    </location>
</feature>
<feature type="topological domain" description="Extracellular" evidence="3">
    <location>
        <begin position="285"/>
        <end position="387"/>
    </location>
</feature>
<feature type="transmembrane region" description="Helical; Name=4" evidence="3">
    <location>
        <begin position="388"/>
        <end position="408"/>
    </location>
</feature>
<feature type="transmembrane region" description="Helical; Name=5" evidence="3">
    <location>
        <begin position="427"/>
        <end position="447"/>
    </location>
</feature>
<feature type="transmembrane region" description="Helical; Name=6" evidence="3">
    <location>
        <begin position="463"/>
        <end position="483"/>
    </location>
</feature>
<feature type="transmembrane region" description="Helical; Name=7" evidence="3">
    <location>
        <begin position="504"/>
        <end position="524"/>
    </location>
</feature>
<feature type="transmembrane region" description="Helical; Name=8" evidence="3">
    <location>
        <begin position="556"/>
        <end position="576"/>
    </location>
</feature>
<feature type="transmembrane region" description="Helical; Name=9" evidence="3">
    <location>
        <begin position="597"/>
        <end position="617"/>
    </location>
</feature>
<feature type="transmembrane region" description="Helical; Name=10" evidence="3">
    <location>
        <begin position="631"/>
        <end position="651"/>
    </location>
</feature>
<feature type="transmembrane region" description="Helical; Name=11" evidence="3">
    <location>
        <begin position="672"/>
        <end position="692"/>
    </location>
</feature>
<feature type="transmembrane region" description="Helical; Name=12" evidence="3">
    <location>
        <begin position="708"/>
        <end position="728"/>
    </location>
</feature>
<feature type="topological domain" description="Cytoplasmic" evidence="3">
    <location>
        <begin position="729"/>
        <end position="790"/>
    </location>
</feature>
<feature type="region of interest" description="Disordered" evidence="4">
    <location>
        <begin position="1"/>
        <end position="39"/>
    </location>
</feature>
<feature type="binding site" evidence="1">
    <location>
        <position position="199"/>
    </location>
    <ligand>
        <name>Na(+)</name>
        <dbReference type="ChEBI" id="CHEBI:29101"/>
        <label>1</label>
    </ligand>
</feature>
<feature type="binding site" evidence="1">
    <location>
        <position position="201"/>
    </location>
    <ligand>
        <name>Na(+)</name>
        <dbReference type="ChEBI" id="CHEBI:29101"/>
        <label>2</label>
    </ligand>
</feature>
<feature type="binding site" evidence="1">
    <location>
        <position position="202"/>
    </location>
    <ligand>
        <name>Na(+)</name>
        <dbReference type="ChEBI" id="CHEBI:29101"/>
        <label>1</label>
    </ligand>
</feature>
<feature type="binding site" evidence="1">
    <location>
        <position position="206"/>
    </location>
    <ligand>
        <name>Na(+)</name>
        <dbReference type="ChEBI" id="CHEBI:29101"/>
        <label>2</label>
    </ligand>
</feature>
<feature type="binding site" evidence="1">
    <location>
        <position position="470"/>
    </location>
    <ligand>
        <name>Na(+)</name>
        <dbReference type="ChEBI" id="CHEBI:29101"/>
        <label>2</label>
    </ligand>
</feature>
<feature type="binding site" evidence="1">
    <location>
        <position position="502"/>
    </location>
    <ligand>
        <name>Na(+)</name>
        <dbReference type="ChEBI" id="CHEBI:29101"/>
        <label>2</label>
    </ligand>
</feature>
<feature type="binding site" evidence="1">
    <location>
        <position position="567"/>
    </location>
    <ligand>
        <name>Na(+)</name>
        <dbReference type="ChEBI" id="CHEBI:29101"/>
        <label>1</label>
    </ligand>
</feature>
<feature type="binding site" evidence="1">
    <location>
        <position position="570"/>
    </location>
    <ligand>
        <name>Na(+)</name>
        <dbReference type="ChEBI" id="CHEBI:29101"/>
        <label>1</label>
    </ligand>
</feature>
<feature type="glycosylation site" description="N-linked (GlcNAc...) asparagine" evidence="3">
    <location>
        <position position="336"/>
    </location>
</feature>
<feature type="glycosylation site" description="N-linked (GlcNAc...) asparagine" evidence="3">
    <location>
        <position position="346"/>
    </location>
</feature>
<feature type="glycosylation site" description="N-linked (GlcNAc...) asparagine" evidence="3">
    <location>
        <position position="351"/>
    </location>
</feature>
<feature type="glycosylation site" description="N-linked (GlcNAc...) asparagine" evidence="3">
    <location>
        <position position="357"/>
    </location>
</feature>
<feature type="disulfide bond" evidence="1">
    <location>
        <begin position="304"/>
        <end position="313"/>
    </location>
</feature>
<accession>A7Y2X0</accession>
<sequence length="790" mass="87452">MDYVNVVDGSKKTMNSPEGAAPGLIGATGITNPTPDNDLPLQASNKLTRLSQSTSNDSKLIAAGEPKACDLERSRVGGSCKMTTPGHSNFVLKRDSVEGCPAKNSSMAESNGQTNPMHCRIVPLQSAEGDTNQGFGKNSLEQNNAKGDWVPISQSTVVLGTDGNTSVFPGTLTGDEEGDENKARGNWSNKLDFILSMVGYAVGLGNVWRFPYLAFKNGGGAFLIPYLTMLALAGLPIFYLEVALGQFASQGPISVWKAIPALQGCGIAMLIISVLIAIYYNIIMCYTIFYLFASLVYVLPWASCNNPWNTPDCKDKDRLLLDSCIISSQPNIQIKNSTFCMTAYPNLTMVNFTSHGNKSFVSGSEEYFKYNMLKISAGIEYPGEIRWPLVFCLFLAWIIVYASLAKGIKTSGKVVYSTATFPYVVLVILLFRGVTLPGAGDGIWWFIMPKWEKLMDATVWKDAATQIFFSLSAAWGGLITLSSYNKFHNNLYRDTLIVTCINSATSIFAGFVIFSVIGFMAHILNVDIEKVADQGPGIAFVVYPEALTRLPLSPFWAIIFFLMLLTLGLDTMFATIETIVTSVSDEFPKLLRTHKPLFTLVCCVAFFIMGFPMITQGGIYMLQLVDNYAASYSLVIIAIFELVGISYIYGLQRFCEDIEMMIGFQPSRFWKICWAFVTPTILTFILGFSFYQWEPMTYGSYHYPSWSMVMGWLMLACSVIWIPIMFVIKMFLAPGTFIERLKLVCSPQPDWGPFLAKHRGERYKNMIDPLGTSSLGLKLPPKDFELGTQC</sequence>
<proteinExistence type="evidence at transcript level"/>
<evidence type="ECO:0000250" key="1">
    <source>
        <dbReference type="UniProtKB" id="Q7K4Y6"/>
    </source>
</evidence>
<evidence type="ECO:0000250" key="2">
    <source>
        <dbReference type="UniProtKB" id="Q9Y345"/>
    </source>
</evidence>
<evidence type="ECO:0000255" key="3"/>
<evidence type="ECO:0000256" key="4">
    <source>
        <dbReference type="SAM" id="MobiDB-lite"/>
    </source>
</evidence>
<evidence type="ECO:0000269" key="5">
    <source>
    </source>
</evidence>
<evidence type="ECO:0000305" key="6"/>
<evidence type="ECO:0000312" key="7">
    <source>
        <dbReference type="EMBL" id="ABV03173.1"/>
    </source>
</evidence>
<protein>
    <recommendedName>
        <fullName>Sodium- and chloride-dependent glycine transporter 2</fullName>
        <shortName>GlyT-2</shortName>
        <shortName>GlyT2</shortName>
        <shortName>xGlyT2</shortName>
    </recommendedName>
    <alternativeName>
        <fullName>Solute carrier family 6 member 5</fullName>
    </alternativeName>
</protein>
<name>SC6A5_XENLA</name>
<organism>
    <name type="scientific">Xenopus laevis</name>
    <name type="common">African clawed frog</name>
    <dbReference type="NCBI Taxonomy" id="8355"/>
    <lineage>
        <taxon>Eukaryota</taxon>
        <taxon>Metazoa</taxon>
        <taxon>Chordata</taxon>
        <taxon>Craniata</taxon>
        <taxon>Vertebrata</taxon>
        <taxon>Euteleostomi</taxon>
        <taxon>Amphibia</taxon>
        <taxon>Batrachia</taxon>
        <taxon>Anura</taxon>
        <taxon>Pipoidea</taxon>
        <taxon>Pipidae</taxon>
        <taxon>Xenopodinae</taxon>
        <taxon>Xenopus</taxon>
        <taxon>Xenopus</taxon>
    </lineage>
</organism>
<dbReference type="EMBL" id="EU117186">
    <property type="protein sequence ID" value="ABV03173.1"/>
    <property type="molecule type" value="mRNA"/>
</dbReference>
<dbReference type="RefSeq" id="NP_001104197.1">
    <property type="nucleotide sequence ID" value="NM_001110727.1"/>
</dbReference>
<dbReference type="SMR" id="A7Y2X0"/>
<dbReference type="GlyCosmos" id="A7Y2X0">
    <property type="glycosylation" value="4 sites, No reported glycans"/>
</dbReference>
<dbReference type="AGR" id="Xenbase:XB-GENE-1029878"/>
<dbReference type="Xenbase" id="XB-GENE-1029878">
    <property type="gene designation" value="slc6a5.S"/>
</dbReference>
<dbReference type="Proteomes" id="UP000186698">
    <property type="component" value="Unplaced"/>
</dbReference>
<dbReference type="GO" id="GO:0005886">
    <property type="term" value="C:plasma membrane"/>
    <property type="evidence" value="ECO:0000250"/>
    <property type="project" value="UniProtKB"/>
</dbReference>
<dbReference type="GO" id="GO:0045202">
    <property type="term" value="C:synapse"/>
    <property type="evidence" value="ECO:0007669"/>
    <property type="project" value="GOC"/>
</dbReference>
<dbReference type="GO" id="GO:0015375">
    <property type="term" value="F:glycine:sodium symporter activity"/>
    <property type="evidence" value="ECO:0000250"/>
    <property type="project" value="UniProtKB"/>
</dbReference>
<dbReference type="GO" id="GO:0046872">
    <property type="term" value="F:metal ion binding"/>
    <property type="evidence" value="ECO:0007669"/>
    <property type="project" value="UniProtKB-KW"/>
</dbReference>
<dbReference type="GO" id="GO:1903804">
    <property type="term" value="P:glycine import across plasma membrane"/>
    <property type="evidence" value="ECO:0000318"/>
    <property type="project" value="GO_Central"/>
</dbReference>
<dbReference type="GO" id="GO:0006836">
    <property type="term" value="P:neurotransmitter transport"/>
    <property type="evidence" value="ECO:0007669"/>
    <property type="project" value="UniProtKB-KW"/>
</dbReference>
<dbReference type="GO" id="GO:0035725">
    <property type="term" value="P:sodium ion transmembrane transport"/>
    <property type="evidence" value="ECO:0000318"/>
    <property type="project" value="GO_Central"/>
</dbReference>
<dbReference type="GO" id="GO:0060012">
    <property type="term" value="P:synaptic transmission, glycinergic"/>
    <property type="evidence" value="ECO:0000318"/>
    <property type="project" value="GO_Central"/>
</dbReference>
<dbReference type="CDD" id="cd11499">
    <property type="entry name" value="SLC6sbd_GlyT2"/>
    <property type="match status" value="1"/>
</dbReference>
<dbReference type="InterPro" id="IPR000175">
    <property type="entry name" value="Na/ntran_symport"/>
</dbReference>
<dbReference type="InterPro" id="IPR037272">
    <property type="entry name" value="SNS_sf"/>
</dbReference>
<dbReference type="PANTHER" id="PTHR11616:SF241">
    <property type="entry name" value="SODIUM- AND CHLORIDE-DEPENDENT GLYCINE TRANSPORTER 2"/>
    <property type="match status" value="1"/>
</dbReference>
<dbReference type="PANTHER" id="PTHR11616">
    <property type="entry name" value="SODIUM/CHLORIDE DEPENDENT TRANSPORTER"/>
    <property type="match status" value="1"/>
</dbReference>
<dbReference type="Pfam" id="PF00209">
    <property type="entry name" value="SNF"/>
    <property type="match status" value="1"/>
</dbReference>
<dbReference type="PRINTS" id="PR00176">
    <property type="entry name" value="NANEUSMPORT"/>
</dbReference>
<dbReference type="SUPFAM" id="SSF161070">
    <property type="entry name" value="SNF-like"/>
    <property type="match status" value="1"/>
</dbReference>
<dbReference type="PROSITE" id="PS00610">
    <property type="entry name" value="NA_NEUROTRAN_SYMP_1"/>
    <property type="match status" value="1"/>
</dbReference>
<dbReference type="PROSITE" id="PS00754">
    <property type="entry name" value="NA_NEUROTRAN_SYMP_2"/>
    <property type="match status" value="1"/>
</dbReference>
<dbReference type="PROSITE" id="PS50267">
    <property type="entry name" value="NA_NEUROTRAN_SYMP_3"/>
    <property type="match status" value="1"/>
</dbReference>